<proteinExistence type="evidence at protein level"/>
<keyword id="KW-0007">Acetylation</keyword>
<keyword id="KW-0133">Cell shape</keyword>
<keyword id="KW-0963">Cytoplasm</keyword>
<keyword id="KW-0206">Cytoskeleton</keyword>
<keyword id="KW-0472">Membrane</keyword>
<keyword id="KW-0597">Phosphoprotein</keyword>
<keyword id="KW-1185">Reference proteome</keyword>
<comment type="function">
    <text evidence="1">Probably involved in the organization of the actin cytoskeleton. May act downstream of CDC42 to induce actin filament assembly leading to cell shape changes. Induces pseudopodia formation in fibroblasts in a CDC42-dependent manner (By similarity).</text>
</comment>
<comment type="subunit">
    <text evidence="1">Interacts with CDC42 and RHOQ, in a GTP-dependent manner, and with SEPT7.</text>
</comment>
<comment type="subcellular location">
    <subcellularLocation>
        <location evidence="1">Endomembrane system</location>
        <topology evidence="1">Peripheral membrane protein</topology>
    </subcellularLocation>
    <subcellularLocation>
        <location evidence="1">Cytoplasm</location>
        <location evidence="1">Cytoskeleton</location>
    </subcellularLocation>
</comment>
<comment type="domain">
    <text evidence="1">The CRIB domain mediates interaction with CDC42.</text>
</comment>
<comment type="similarity">
    <text evidence="6">Belongs to the BORG/CEP family.</text>
</comment>
<protein>
    <recommendedName>
        <fullName>Cdc42 effector protein 2</fullName>
    </recommendedName>
    <alternativeName>
        <fullName>Binder of Rho GTPases 1</fullName>
    </alternativeName>
</protein>
<gene>
    <name type="primary">Cdc42ep2</name>
    <name type="synonym">Borg1</name>
    <name type="synonym">Cep2</name>
</gene>
<feature type="initiator methionine" description="Removed" evidence="2">
    <location>
        <position position="1"/>
    </location>
</feature>
<feature type="chain" id="PRO_0000212650" description="Cdc42 effector protein 2">
    <location>
        <begin position="2"/>
        <end position="214"/>
    </location>
</feature>
<feature type="domain" description="CRIB" evidence="4">
    <location>
        <begin position="30"/>
        <end position="44"/>
    </location>
</feature>
<feature type="region of interest" description="Disordered" evidence="5">
    <location>
        <begin position="118"/>
        <end position="151"/>
    </location>
</feature>
<feature type="modified residue" description="N-acetylserine" evidence="2">
    <location>
        <position position="2"/>
    </location>
</feature>
<feature type="modified residue" description="Phosphoserine" evidence="2">
    <location>
        <position position="31"/>
    </location>
</feature>
<feature type="modified residue" description="Phosphoserine" evidence="7">
    <location>
        <position position="101"/>
    </location>
</feature>
<feature type="modified residue" description="Phosphoserine" evidence="7">
    <location>
        <position position="137"/>
    </location>
</feature>
<feature type="modified residue" description="Phosphoserine" evidence="7">
    <location>
        <position position="141"/>
    </location>
</feature>
<feature type="modified residue" description="Phosphoserine" evidence="3">
    <location>
        <position position="145"/>
    </location>
</feature>
<sequence length="214" mass="23048">MSTKVPIYLKRGSRKGKKEKLRDLLSSDMISPPLGDFRHTIHIGSGGGDDMFGDISFLQGKFHLLPGTAVEEAEEDGSFDLPFQFTRTTTVCGRELPGGLSPLLKNAISLPVIGGPQALTLPTTQAPPKPPRLHLESPQPSPKSSPQEAGNVDIWRVPEAGLPHNGMSPEPEAEEPFLSHASSLLSLHVDLGPSILDDVLQIMDQDLGRVQIPT</sequence>
<organism>
    <name type="scientific">Rattus norvegicus</name>
    <name type="common">Rat</name>
    <dbReference type="NCBI Taxonomy" id="10116"/>
    <lineage>
        <taxon>Eukaryota</taxon>
        <taxon>Metazoa</taxon>
        <taxon>Chordata</taxon>
        <taxon>Craniata</taxon>
        <taxon>Vertebrata</taxon>
        <taxon>Euteleostomi</taxon>
        <taxon>Mammalia</taxon>
        <taxon>Eutheria</taxon>
        <taxon>Euarchontoglires</taxon>
        <taxon>Glires</taxon>
        <taxon>Rodentia</taxon>
        <taxon>Myomorpha</taxon>
        <taxon>Muroidea</taxon>
        <taxon>Muridae</taxon>
        <taxon>Murinae</taxon>
        <taxon>Rattus</taxon>
    </lineage>
</organism>
<name>BORG1_RAT</name>
<dbReference type="EMBL" id="BC087091">
    <property type="protein sequence ID" value="AAH87091.1"/>
    <property type="molecule type" value="mRNA"/>
</dbReference>
<dbReference type="RefSeq" id="NP_001009689.1">
    <property type="nucleotide sequence ID" value="NM_001009689.1"/>
</dbReference>
<dbReference type="RefSeq" id="XP_006230868.1">
    <property type="nucleotide sequence ID" value="XM_006230806.5"/>
</dbReference>
<dbReference type="RefSeq" id="XP_006230869.1">
    <property type="nucleotide sequence ID" value="XM_006230807.3"/>
</dbReference>
<dbReference type="RefSeq" id="XP_017444741.1">
    <property type="nucleotide sequence ID" value="XM_017589252.3"/>
</dbReference>
<dbReference type="RefSeq" id="XP_017444742.1">
    <property type="nucleotide sequence ID" value="XM_017589253.3"/>
</dbReference>
<dbReference type="RefSeq" id="XP_017444743.1">
    <property type="nucleotide sequence ID" value="XM_017589254.3"/>
</dbReference>
<dbReference type="RefSeq" id="XP_017444744.1">
    <property type="nucleotide sequence ID" value="XM_017589255.3"/>
</dbReference>
<dbReference type="RefSeq" id="XP_038935597.1">
    <property type="nucleotide sequence ID" value="XM_039079669.2"/>
</dbReference>
<dbReference type="RefSeq" id="XP_063120458.1">
    <property type="nucleotide sequence ID" value="XM_063264388.1"/>
</dbReference>
<dbReference type="RefSeq" id="XP_063120466.1">
    <property type="nucleotide sequence ID" value="XM_063264396.1"/>
</dbReference>
<dbReference type="FunCoup" id="Q5PQP4">
    <property type="interactions" value="411"/>
</dbReference>
<dbReference type="STRING" id="10116.ENSRNOP00000028379"/>
<dbReference type="iPTMnet" id="Q5PQP4"/>
<dbReference type="PhosphoSitePlus" id="Q5PQP4"/>
<dbReference type="PaxDb" id="10116-ENSRNOP00000028379"/>
<dbReference type="Ensembl" id="ENSRNOT00000028379.6">
    <property type="protein sequence ID" value="ENSRNOP00000028379.4"/>
    <property type="gene ID" value="ENSRNOG00000020904.6"/>
</dbReference>
<dbReference type="Ensembl" id="ENSRNOT00000096503.1">
    <property type="protein sequence ID" value="ENSRNOP00000079453.1"/>
    <property type="gene ID" value="ENSRNOG00000020904.6"/>
</dbReference>
<dbReference type="Ensembl" id="ENSRNOT00000105520.1">
    <property type="protein sequence ID" value="ENSRNOP00000095646.1"/>
    <property type="gene ID" value="ENSRNOG00000020904.6"/>
</dbReference>
<dbReference type="GeneID" id="309175"/>
<dbReference type="KEGG" id="rno:309175"/>
<dbReference type="UCSC" id="RGD:1310253">
    <property type="organism name" value="rat"/>
</dbReference>
<dbReference type="AGR" id="RGD:1310253"/>
<dbReference type="CTD" id="10435"/>
<dbReference type="RGD" id="1310253">
    <property type="gene designation" value="Cdc42ep2"/>
</dbReference>
<dbReference type="eggNOG" id="ENOG502RY28">
    <property type="taxonomic scope" value="Eukaryota"/>
</dbReference>
<dbReference type="GeneTree" id="ENSGT00940000161776"/>
<dbReference type="HOGENOM" id="CLU_073229_0_0_1"/>
<dbReference type="InParanoid" id="Q5PQP4"/>
<dbReference type="OMA" id="DMWRIPE"/>
<dbReference type="OrthoDB" id="14093at9989"/>
<dbReference type="PhylomeDB" id="Q5PQP4"/>
<dbReference type="TreeFam" id="TF331725"/>
<dbReference type="Reactome" id="R-RNO-5687128">
    <property type="pathway name" value="MAPK6/MAPK4 signaling"/>
</dbReference>
<dbReference type="Reactome" id="R-RNO-9013406">
    <property type="pathway name" value="RHOQ GTPase cycle"/>
</dbReference>
<dbReference type="PRO" id="PR:Q5PQP4"/>
<dbReference type="Proteomes" id="UP000002494">
    <property type="component" value="Chromosome 1"/>
</dbReference>
<dbReference type="Bgee" id="ENSRNOG00000020904">
    <property type="expression patterns" value="Expressed in jejunum and 20 other cell types or tissues"/>
</dbReference>
<dbReference type="GO" id="GO:0005737">
    <property type="term" value="C:cytoplasm"/>
    <property type="evidence" value="ECO:0000266"/>
    <property type="project" value="RGD"/>
</dbReference>
<dbReference type="GO" id="GO:0005856">
    <property type="term" value="C:cytoskeleton"/>
    <property type="evidence" value="ECO:0000318"/>
    <property type="project" value="GO_Central"/>
</dbReference>
<dbReference type="GO" id="GO:0012505">
    <property type="term" value="C:endomembrane system"/>
    <property type="evidence" value="ECO:0007669"/>
    <property type="project" value="UniProtKB-SubCell"/>
</dbReference>
<dbReference type="GO" id="GO:0016020">
    <property type="term" value="C:membrane"/>
    <property type="evidence" value="ECO:0000266"/>
    <property type="project" value="RGD"/>
</dbReference>
<dbReference type="GO" id="GO:0045335">
    <property type="term" value="C:phagocytic vesicle"/>
    <property type="evidence" value="ECO:0000266"/>
    <property type="project" value="RGD"/>
</dbReference>
<dbReference type="GO" id="GO:0005886">
    <property type="term" value="C:plasma membrane"/>
    <property type="evidence" value="ECO:0000266"/>
    <property type="project" value="RGD"/>
</dbReference>
<dbReference type="GO" id="GO:0005096">
    <property type="term" value="F:GTPase activator activity"/>
    <property type="evidence" value="ECO:0000266"/>
    <property type="project" value="RGD"/>
</dbReference>
<dbReference type="GO" id="GO:0001515">
    <property type="term" value="F:opioid peptide activity"/>
    <property type="evidence" value="ECO:0000266"/>
    <property type="project" value="RGD"/>
</dbReference>
<dbReference type="GO" id="GO:0031267">
    <property type="term" value="F:small GTPase binding"/>
    <property type="evidence" value="ECO:0000266"/>
    <property type="project" value="RGD"/>
</dbReference>
<dbReference type="GO" id="GO:0030036">
    <property type="term" value="P:actin cytoskeleton organization"/>
    <property type="evidence" value="ECO:0000266"/>
    <property type="project" value="RGD"/>
</dbReference>
<dbReference type="GO" id="GO:0071346">
    <property type="term" value="P:cellular response to type II interferon"/>
    <property type="evidence" value="ECO:0000266"/>
    <property type="project" value="RGD"/>
</dbReference>
<dbReference type="GO" id="GO:0030838">
    <property type="term" value="P:positive regulation of actin filament polymerization"/>
    <property type="evidence" value="ECO:0000266"/>
    <property type="project" value="RGD"/>
</dbReference>
<dbReference type="GO" id="GO:0031274">
    <property type="term" value="P:positive regulation of pseudopodium assembly"/>
    <property type="evidence" value="ECO:0000266"/>
    <property type="project" value="RGD"/>
</dbReference>
<dbReference type="GO" id="GO:0008360">
    <property type="term" value="P:regulation of cell shape"/>
    <property type="evidence" value="ECO:0000266"/>
    <property type="project" value="RGD"/>
</dbReference>
<dbReference type="GO" id="GO:0007266">
    <property type="term" value="P:Rho protein signal transduction"/>
    <property type="evidence" value="ECO:0000318"/>
    <property type="project" value="GO_Central"/>
</dbReference>
<dbReference type="InterPro" id="IPR029273">
    <property type="entry name" value="Cdc42_effect-like"/>
</dbReference>
<dbReference type="InterPro" id="IPR051296">
    <property type="entry name" value="Cdc42_Effector_BORG/CEP"/>
</dbReference>
<dbReference type="InterPro" id="IPR017363">
    <property type="entry name" value="Cdc42_effector_prot_2"/>
</dbReference>
<dbReference type="InterPro" id="IPR000095">
    <property type="entry name" value="CRIB_dom"/>
</dbReference>
<dbReference type="PANTHER" id="PTHR15344:SF4">
    <property type="entry name" value="CDC42 EFFECTOR PROTEIN 2"/>
    <property type="match status" value="1"/>
</dbReference>
<dbReference type="PANTHER" id="PTHR15344">
    <property type="entry name" value="CDC42 EFFECTOR PROTEIN BORG"/>
    <property type="match status" value="1"/>
</dbReference>
<dbReference type="Pfam" id="PF14957">
    <property type="entry name" value="BORG_CEP"/>
    <property type="match status" value="2"/>
</dbReference>
<dbReference type="Pfam" id="PF00786">
    <property type="entry name" value="PBD"/>
    <property type="match status" value="1"/>
</dbReference>
<dbReference type="PIRSF" id="PIRSF038036">
    <property type="entry name" value="Cdc42_effector_p2"/>
    <property type="match status" value="1"/>
</dbReference>
<dbReference type="SMART" id="SM00285">
    <property type="entry name" value="PBD"/>
    <property type="match status" value="1"/>
</dbReference>
<dbReference type="PROSITE" id="PS50108">
    <property type="entry name" value="CRIB"/>
    <property type="match status" value="1"/>
</dbReference>
<accession>Q5PQP4</accession>
<reference key="1">
    <citation type="journal article" date="2004" name="Genome Res.">
        <title>The status, quality, and expansion of the NIH full-length cDNA project: the Mammalian Gene Collection (MGC).</title>
        <authorList>
            <consortium name="The MGC Project Team"/>
        </authorList>
    </citation>
    <scope>NUCLEOTIDE SEQUENCE [LARGE SCALE MRNA]</scope>
    <source>
        <tissue>Heart</tissue>
    </source>
</reference>
<reference key="2">
    <citation type="journal article" date="2012" name="Nat. Commun.">
        <title>Quantitative maps of protein phosphorylation sites across 14 different rat organs and tissues.</title>
        <authorList>
            <person name="Lundby A."/>
            <person name="Secher A."/>
            <person name="Lage K."/>
            <person name="Nordsborg N.B."/>
            <person name="Dmytriyev A."/>
            <person name="Lundby C."/>
            <person name="Olsen J.V."/>
        </authorList>
    </citation>
    <scope>PHOSPHORYLATION [LARGE SCALE ANALYSIS] AT SER-101; SER-137 AND SER-141</scope>
    <scope>IDENTIFICATION BY MASS SPECTROMETRY [LARGE SCALE ANALYSIS]</scope>
</reference>
<evidence type="ECO:0000250" key="1"/>
<evidence type="ECO:0000250" key="2">
    <source>
        <dbReference type="UniProtKB" id="O14613"/>
    </source>
</evidence>
<evidence type="ECO:0000250" key="3">
    <source>
        <dbReference type="UniProtKB" id="Q8JZX9"/>
    </source>
</evidence>
<evidence type="ECO:0000255" key="4">
    <source>
        <dbReference type="PROSITE-ProRule" id="PRU00057"/>
    </source>
</evidence>
<evidence type="ECO:0000256" key="5">
    <source>
        <dbReference type="SAM" id="MobiDB-lite"/>
    </source>
</evidence>
<evidence type="ECO:0000305" key="6"/>
<evidence type="ECO:0007744" key="7">
    <source>
    </source>
</evidence>